<protein>
    <recommendedName>
        <fullName evidence="1">Large ribosomal subunit protein bL9</fullName>
    </recommendedName>
    <alternativeName>
        <fullName evidence="2">50S ribosomal protein L9</fullName>
    </alternativeName>
</protein>
<evidence type="ECO:0000255" key="1">
    <source>
        <dbReference type="HAMAP-Rule" id="MF_00503"/>
    </source>
</evidence>
<evidence type="ECO:0000305" key="2"/>
<proteinExistence type="inferred from homology"/>
<dbReference type="EMBL" id="CP000153">
    <property type="protein sequence ID" value="ABB44652.1"/>
    <property type="molecule type" value="Genomic_DNA"/>
</dbReference>
<dbReference type="RefSeq" id="WP_011373004.1">
    <property type="nucleotide sequence ID" value="NC_007575.1"/>
</dbReference>
<dbReference type="SMR" id="Q30QS9"/>
<dbReference type="STRING" id="326298.Suden_1375"/>
<dbReference type="KEGG" id="tdn:Suden_1375"/>
<dbReference type="eggNOG" id="COG0359">
    <property type="taxonomic scope" value="Bacteria"/>
</dbReference>
<dbReference type="HOGENOM" id="CLU_078938_3_0_7"/>
<dbReference type="OrthoDB" id="9788336at2"/>
<dbReference type="Proteomes" id="UP000002714">
    <property type="component" value="Chromosome"/>
</dbReference>
<dbReference type="GO" id="GO:1990904">
    <property type="term" value="C:ribonucleoprotein complex"/>
    <property type="evidence" value="ECO:0007669"/>
    <property type="project" value="UniProtKB-KW"/>
</dbReference>
<dbReference type="GO" id="GO:0005840">
    <property type="term" value="C:ribosome"/>
    <property type="evidence" value="ECO:0007669"/>
    <property type="project" value="UniProtKB-KW"/>
</dbReference>
<dbReference type="GO" id="GO:0019843">
    <property type="term" value="F:rRNA binding"/>
    <property type="evidence" value="ECO:0007669"/>
    <property type="project" value="UniProtKB-UniRule"/>
</dbReference>
<dbReference type="GO" id="GO:0003735">
    <property type="term" value="F:structural constituent of ribosome"/>
    <property type="evidence" value="ECO:0007669"/>
    <property type="project" value="InterPro"/>
</dbReference>
<dbReference type="GO" id="GO:0006412">
    <property type="term" value="P:translation"/>
    <property type="evidence" value="ECO:0007669"/>
    <property type="project" value="UniProtKB-UniRule"/>
</dbReference>
<dbReference type="Gene3D" id="3.10.430.100">
    <property type="entry name" value="Ribosomal protein L9, C-terminal domain"/>
    <property type="match status" value="1"/>
</dbReference>
<dbReference type="Gene3D" id="3.40.5.10">
    <property type="entry name" value="Ribosomal protein L9, N-terminal domain"/>
    <property type="match status" value="1"/>
</dbReference>
<dbReference type="HAMAP" id="MF_00503">
    <property type="entry name" value="Ribosomal_bL9"/>
    <property type="match status" value="1"/>
</dbReference>
<dbReference type="InterPro" id="IPR000244">
    <property type="entry name" value="Ribosomal_bL9"/>
</dbReference>
<dbReference type="InterPro" id="IPR009027">
    <property type="entry name" value="Ribosomal_bL9/RNase_H1_N"/>
</dbReference>
<dbReference type="InterPro" id="IPR020594">
    <property type="entry name" value="Ribosomal_bL9_bac/chp"/>
</dbReference>
<dbReference type="InterPro" id="IPR020069">
    <property type="entry name" value="Ribosomal_bL9_C"/>
</dbReference>
<dbReference type="InterPro" id="IPR036791">
    <property type="entry name" value="Ribosomal_bL9_C_sf"/>
</dbReference>
<dbReference type="InterPro" id="IPR020070">
    <property type="entry name" value="Ribosomal_bL9_N"/>
</dbReference>
<dbReference type="InterPro" id="IPR036935">
    <property type="entry name" value="Ribosomal_bL9_N_sf"/>
</dbReference>
<dbReference type="NCBIfam" id="TIGR00158">
    <property type="entry name" value="L9"/>
    <property type="match status" value="1"/>
</dbReference>
<dbReference type="PANTHER" id="PTHR21368">
    <property type="entry name" value="50S RIBOSOMAL PROTEIN L9"/>
    <property type="match status" value="1"/>
</dbReference>
<dbReference type="Pfam" id="PF03948">
    <property type="entry name" value="Ribosomal_L9_C"/>
    <property type="match status" value="1"/>
</dbReference>
<dbReference type="Pfam" id="PF01281">
    <property type="entry name" value="Ribosomal_L9_N"/>
    <property type="match status" value="1"/>
</dbReference>
<dbReference type="SUPFAM" id="SSF55658">
    <property type="entry name" value="L9 N-domain-like"/>
    <property type="match status" value="1"/>
</dbReference>
<dbReference type="SUPFAM" id="SSF55653">
    <property type="entry name" value="Ribosomal protein L9 C-domain"/>
    <property type="match status" value="1"/>
</dbReference>
<dbReference type="PROSITE" id="PS00651">
    <property type="entry name" value="RIBOSOMAL_L9"/>
    <property type="match status" value="1"/>
</dbReference>
<feature type="chain" id="PRO_0000236613" description="Large ribosomal subunit protein bL9">
    <location>
        <begin position="1"/>
        <end position="148"/>
    </location>
</feature>
<accession>Q30QS9</accession>
<gene>
    <name evidence="1" type="primary">rplI</name>
    <name type="ordered locus">Suden_1375</name>
</gene>
<sequence>MKILLIKDVKTLGKAGEVKEVKDGYGQNFLIAKGFAKHATAEILAQHKEDERIAAENLAKEIVSLKDLATKLDKAEIVITKKLGQNGHLFGSITKDEVAHALLEQHNVEIDKKHITDKLSIKTAGKHDLDLRLGHGIHATLHVDVVGE</sequence>
<organism>
    <name type="scientific">Sulfurimonas denitrificans (strain ATCC 33889 / DSM 1251)</name>
    <name type="common">Thiomicrospira denitrificans (strain ATCC 33889 / DSM 1251)</name>
    <dbReference type="NCBI Taxonomy" id="326298"/>
    <lineage>
        <taxon>Bacteria</taxon>
        <taxon>Pseudomonadati</taxon>
        <taxon>Campylobacterota</taxon>
        <taxon>Epsilonproteobacteria</taxon>
        <taxon>Campylobacterales</taxon>
        <taxon>Sulfurimonadaceae</taxon>
        <taxon>Sulfurimonas</taxon>
    </lineage>
</organism>
<keyword id="KW-1185">Reference proteome</keyword>
<keyword id="KW-0687">Ribonucleoprotein</keyword>
<keyword id="KW-0689">Ribosomal protein</keyword>
<keyword id="KW-0694">RNA-binding</keyword>
<keyword id="KW-0699">rRNA-binding</keyword>
<name>RL9_SULDN</name>
<comment type="function">
    <text evidence="1">Binds to the 23S rRNA.</text>
</comment>
<comment type="similarity">
    <text evidence="1">Belongs to the bacterial ribosomal protein bL9 family.</text>
</comment>
<reference key="1">
    <citation type="journal article" date="2008" name="Appl. Environ. Microbiol.">
        <title>Genome of the epsilonproteobacterial chemolithoautotroph Sulfurimonas denitrificans.</title>
        <authorList>
            <person name="Sievert S.M."/>
            <person name="Scott K.M."/>
            <person name="Klotz M.G."/>
            <person name="Chain P.S.G."/>
            <person name="Hauser L.J."/>
            <person name="Hemp J."/>
            <person name="Huegler M."/>
            <person name="Land M."/>
            <person name="Lapidus A."/>
            <person name="Larimer F.W."/>
            <person name="Lucas S."/>
            <person name="Malfatti S.A."/>
            <person name="Meyer F."/>
            <person name="Paulsen I.T."/>
            <person name="Ren Q."/>
            <person name="Simon J."/>
            <person name="Bailey K."/>
            <person name="Diaz E."/>
            <person name="Fitzpatrick K.A."/>
            <person name="Glover B."/>
            <person name="Gwatney N."/>
            <person name="Korajkic A."/>
            <person name="Long A."/>
            <person name="Mobberley J.M."/>
            <person name="Pantry S.N."/>
            <person name="Pazder G."/>
            <person name="Peterson S."/>
            <person name="Quintanilla J.D."/>
            <person name="Sprinkle R."/>
            <person name="Stephens J."/>
            <person name="Thomas P."/>
            <person name="Vaughn R."/>
            <person name="Weber M.J."/>
            <person name="Wooten L.L."/>
        </authorList>
    </citation>
    <scope>NUCLEOTIDE SEQUENCE [LARGE SCALE GENOMIC DNA]</scope>
    <source>
        <strain>ATCC 33889 / DSM 1251</strain>
    </source>
</reference>